<name>RSH3L_ARATH</name>
<accession>Q9M5P5</accession>
<organism>
    <name type="scientific">Arabidopsis thaliana</name>
    <name type="common">Mouse-ear cress</name>
    <dbReference type="NCBI Taxonomy" id="3702"/>
    <lineage>
        <taxon>Eukaryota</taxon>
        <taxon>Viridiplantae</taxon>
        <taxon>Streptophyta</taxon>
        <taxon>Embryophyta</taxon>
        <taxon>Tracheophyta</taxon>
        <taxon>Spermatophyta</taxon>
        <taxon>Magnoliopsida</taxon>
        <taxon>eudicotyledons</taxon>
        <taxon>Gunneridae</taxon>
        <taxon>Pentapetalae</taxon>
        <taxon>rosids</taxon>
        <taxon>malvids</taxon>
        <taxon>Brassicales</taxon>
        <taxon>Brassicaceae</taxon>
        <taxon>Camelineae</taxon>
        <taxon>Arabidopsis</taxon>
    </lineage>
</organism>
<proteinExistence type="evidence at transcript level"/>
<dbReference type="EC" id="2.7.6.5"/>
<dbReference type="EMBL" id="AF225704">
    <property type="protein sequence ID" value="AAF37283.1"/>
    <property type="molecule type" value="mRNA"/>
</dbReference>
<dbReference type="SMR" id="Q9M5P5"/>
<dbReference type="ExpressionAtlas" id="Q9M5P5">
    <property type="expression patterns" value="baseline and differential"/>
</dbReference>
<dbReference type="GO" id="GO:0009507">
    <property type="term" value="C:chloroplast"/>
    <property type="evidence" value="ECO:0007669"/>
    <property type="project" value="UniProtKB-SubCell"/>
</dbReference>
<dbReference type="GO" id="GO:0005524">
    <property type="term" value="F:ATP binding"/>
    <property type="evidence" value="ECO:0007669"/>
    <property type="project" value="UniProtKB-KW"/>
</dbReference>
<dbReference type="GO" id="GO:0005525">
    <property type="term" value="F:GTP binding"/>
    <property type="evidence" value="ECO:0007669"/>
    <property type="project" value="UniProtKB-KW"/>
</dbReference>
<dbReference type="GO" id="GO:0008728">
    <property type="term" value="F:GTP diphosphokinase activity"/>
    <property type="evidence" value="ECO:0007669"/>
    <property type="project" value="UniProtKB-EC"/>
</dbReference>
<dbReference type="GO" id="GO:0016301">
    <property type="term" value="F:kinase activity"/>
    <property type="evidence" value="ECO:0007669"/>
    <property type="project" value="UniProtKB-KW"/>
</dbReference>
<dbReference type="GO" id="GO:0015969">
    <property type="term" value="P:guanosine tetraphosphate metabolic process"/>
    <property type="evidence" value="ECO:0007669"/>
    <property type="project" value="InterPro"/>
</dbReference>
<dbReference type="CDD" id="cd00077">
    <property type="entry name" value="HDc"/>
    <property type="match status" value="1"/>
</dbReference>
<dbReference type="CDD" id="cd05399">
    <property type="entry name" value="NT_Rel-Spo_like"/>
    <property type="match status" value="1"/>
</dbReference>
<dbReference type="FunFam" id="1.10.3210.10:FF:000001">
    <property type="entry name" value="GTP pyrophosphokinase RelA"/>
    <property type="match status" value="1"/>
</dbReference>
<dbReference type="FunFam" id="3.30.460.10:FF:000001">
    <property type="entry name" value="GTP pyrophosphokinase RelA"/>
    <property type="match status" value="1"/>
</dbReference>
<dbReference type="Gene3D" id="3.30.460.10">
    <property type="entry name" value="Beta Polymerase, domain 2"/>
    <property type="match status" value="1"/>
</dbReference>
<dbReference type="Gene3D" id="1.10.3210.10">
    <property type="entry name" value="Hypothetical protein af1432"/>
    <property type="match status" value="1"/>
</dbReference>
<dbReference type="InterPro" id="IPR003607">
    <property type="entry name" value="HD/PDEase_dom"/>
</dbReference>
<dbReference type="InterPro" id="IPR006674">
    <property type="entry name" value="HD_domain"/>
</dbReference>
<dbReference type="InterPro" id="IPR043519">
    <property type="entry name" value="NT_sf"/>
</dbReference>
<dbReference type="InterPro" id="IPR007685">
    <property type="entry name" value="RelA_SpoT"/>
</dbReference>
<dbReference type="PANTHER" id="PTHR21262:SF0">
    <property type="entry name" value="GTP DIPHOSPHOKINASE RSH3, CHLOROPLASTIC-RELATED"/>
    <property type="match status" value="1"/>
</dbReference>
<dbReference type="PANTHER" id="PTHR21262">
    <property type="entry name" value="GUANOSINE-3',5'-BIS DIPHOSPHATE 3'-PYROPHOSPHOHYDROLASE"/>
    <property type="match status" value="1"/>
</dbReference>
<dbReference type="Pfam" id="PF13328">
    <property type="entry name" value="HD_4"/>
    <property type="match status" value="1"/>
</dbReference>
<dbReference type="Pfam" id="PF04607">
    <property type="entry name" value="RelA_SpoT"/>
    <property type="match status" value="1"/>
</dbReference>
<dbReference type="SMART" id="SM00471">
    <property type="entry name" value="HDc"/>
    <property type="match status" value="1"/>
</dbReference>
<dbReference type="SMART" id="SM00954">
    <property type="entry name" value="RelA_SpoT"/>
    <property type="match status" value="1"/>
</dbReference>
<dbReference type="SUPFAM" id="SSF109604">
    <property type="entry name" value="HD-domain/PDEase-like"/>
    <property type="match status" value="1"/>
</dbReference>
<dbReference type="SUPFAM" id="SSF81301">
    <property type="entry name" value="Nucleotidyltransferase"/>
    <property type="match status" value="1"/>
</dbReference>
<dbReference type="PROSITE" id="PS51831">
    <property type="entry name" value="HD"/>
    <property type="match status" value="1"/>
</dbReference>
<comment type="function">
    <text evidence="1">Probable ppGpp (guanosine 3'-diphosphate 5'-diphosphate) synthetase that may be involved in a rapid plant ppGpp-mediated response to pathogens and other stresses.</text>
</comment>
<comment type="catalytic activity">
    <reaction>
        <text>GTP + ATP = guanosine 3'-diphosphate 5'-triphosphate + AMP</text>
        <dbReference type="Rhea" id="RHEA:22088"/>
        <dbReference type="ChEBI" id="CHEBI:30616"/>
        <dbReference type="ChEBI" id="CHEBI:37565"/>
        <dbReference type="ChEBI" id="CHEBI:142410"/>
        <dbReference type="ChEBI" id="CHEBI:456215"/>
        <dbReference type="EC" id="2.7.6.5"/>
    </reaction>
</comment>
<comment type="subcellular location">
    <subcellularLocation>
        <location evidence="5">Plastid</location>
        <location evidence="5">Chloroplast</location>
    </subcellularLocation>
</comment>
<comment type="similarity">
    <text evidence="5">Belongs to the RelA/SpoT family.</text>
</comment>
<reference key="1">
    <citation type="journal article" date="2000" name="Proc. Natl. Acad. Sci. U.S.A.">
        <title>Arabidopsis RelA/SpoT homologs implicate (p)ppGpp in plant signaling.</title>
        <authorList>
            <person name="van der Biezen E.A."/>
            <person name="Sun J."/>
            <person name="Coleman M.J."/>
            <person name="Bibb M.J."/>
            <person name="Jones J.D."/>
        </authorList>
    </citation>
    <scope>NUCLEOTIDE SEQUENCE [MRNA]</scope>
    <source>
        <strain>cv. Landsberg erecta</strain>
    </source>
</reference>
<feature type="transit peptide" description="Chloroplast" evidence="2">
    <location>
        <begin position="1"/>
        <end position="64"/>
    </location>
</feature>
<feature type="chain" id="PRO_0000429851" description="Probable GTP diphosphokinase RSH3, chloroplastic">
    <location>
        <begin position="65"/>
        <end position="712"/>
    </location>
</feature>
<feature type="domain" description="HD" evidence="3">
    <location>
        <begin position="237"/>
        <end position="338"/>
    </location>
</feature>
<feature type="region of interest" description="Disordered" evidence="4">
    <location>
        <begin position="65"/>
        <end position="84"/>
    </location>
</feature>
<feature type="compositionally biased region" description="Low complexity" evidence="4">
    <location>
        <begin position="65"/>
        <end position="74"/>
    </location>
</feature>
<protein>
    <recommendedName>
        <fullName>Probable GTP diphosphokinase RSH3, chloroplastic</fullName>
        <ecNumber>2.7.6.5</ecNumber>
    </recommendedName>
    <alternativeName>
        <fullName>RelA/SpoT homolog 3</fullName>
        <shortName>AtRSH3</shortName>
    </alternativeName>
    <alternativeName>
        <fullName>ppGpp synthetase RSH3</fullName>
    </alternativeName>
</protein>
<keyword id="KW-0067">ATP-binding</keyword>
<keyword id="KW-0150">Chloroplast</keyword>
<keyword id="KW-0342">GTP-binding</keyword>
<keyword id="KW-0418">Kinase</keyword>
<keyword id="KW-0547">Nucleotide-binding</keyword>
<keyword id="KW-0934">Plastid</keyword>
<keyword id="KW-0346">Stress response</keyword>
<keyword id="KW-0808">Transferase</keyword>
<keyword id="KW-0809">Transit peptide</keyword>
<gene>
    <name type="primary">RSH3</name>
</gene>
<evidence type="ECO:0000250" key="1"/>
<evidence type="ECO:0000255" key="2"/>
<evidence type="ECO:0000255" key="3">
    <source>
        <dbReference type="PROSITE-ProRule" id="PRU01175"/>
    </source>
</evidence>
<evidence type="ECO:0000256" key="4">
    <source>
        <dbReference type="SAM" id="MobiDB-lite"/>
    </source>
</evidence>
<evidence type="ECO:0000305" key="5"/>
<sequence>MVVATTIALYASPASTVCSTAHQINAHISCDLDLNSRSSSASSSTSSPTIGGLSLLFSGASVKSSSSSSSSHPSVGEELASIRHDRSEDRTLSGSFCYSPSKFIGSSYLKRDHQSPVSVLHGPISSGNSPPMRISRDRNLDGGSALRVGSSRLFNGFVRKAIGSCVDYDTDSVLVDEQLPFTMDDGFEGERRQPYARDLLRRAQLKHKIFEDESVIKAFYEAEKAHRGQMRATGDPYLQHCVETAMLLADIGANSTVVVAGILHDTLDDSFMSYDYILRTFGSGVADLVEGVSQLSKLARENNTACKTVEADRLHTMFLAMADARAVLIKLADRLHNMMTLYALPPVKRQRFAKETLEIFAPLANRLGISSWKVKLENLCFKHLHPDQHHEMSDMLEDSFDEAMITSAIEKLEQALKKEGISYHVVSGRHKSLYSIYCKMLKKKLTMDEIHDIHGLRLIVDNEKDCYKALGVVHKLWSEVPGKLKDYISHPKFNGYQSLHTVVMGDGTIPLEVQIRTKEMHLQAEFGFAAHWRYKEGDCKHSSFVLQMVEWARWVVTWHFETMSKDGSSICSSEPLCSFPSHAEDCPFSYKPSGNQEGPVYVIVIENEKMSVQEFPENSTVSDLLRRAGPGSSRWSMYSIPAKEELRPRLNQTPVSDLKCKLKMGDVVELTPAIPDKSLTEYREEIQRMYDRGLAFSRPHRAATGTMVGWGS</sequence>